<organism>
    <name type="scientific">Homo sapiens</name>
    <name type="common">Human</name>
    <dbReference type="NCBI Taxonomy" id="9606"/>
    <lineage>
        <taxon>Eukaryota</taxon>
        <taxon>Metazoa</taxon>
        <taxon>Chordata</taxon>
        <taxon>Craniata</taxon>
        <taxon>Vertebrata</taxon>
        <taxon>Euteleostomi</taxon>
        <taxon>Mammalia</taxon>
        <taxon>Eutheria</taxon>
        <taxon>Euarchontoglires</taxon>
        <taxon>Primates</taxon>
        <taxon>Haplorrhini</taxon>
        <taxon>Catarrhini</taxon>
        <taxon>Hominidae</taxon>
        <taxon>Homo</taxon>
    </lineage>
</organism>
<gene>
    <name type="primary">LEPROTL1</name>
    <name type="ORF">My047</name>
    <name type="ORF">UNQ577/PRO1139</name>
</gene>
<feature type="chain" id="PRO_0000215197" description="Leptin receptor overlapping transcript-like 1">
    <location>
        <begin position="1"/>
        <end position="131"/>
    </location>
</feature>
<feature type="transmembrane region" description="Helical" evidence="2">
    <location>
        <begin position="7"/>
        <end position="27"/>
    </location>
</feature>
<feature type="transmembrane region" description="Helical" evidence="2">
    <location>
        <begin position="32"/>
        <end position="52"/>
    </location>
</feature>
<feature type="transmembrane region" description="Helical" evidence="2">
    <location>
        <begin position="69"/>
        <end position="89"/>
    </location>
</feature>
<feature type="transmembrane region" description="Helical" evidence="2">
    <location>
        <begin position="100"/>
        <end position="120"/>
    </location>
</feature>
<feature type="splice variant" id="VSP_046307" description="In isoform 2." evidence="4">
    <original>IEWGACALVLTGNTVIFATILGFFLVFGSNDDFSWQQW</original>
    <variation>MGRLPFFSKMGTAESEGRETLTQQLPLPAAAMRRLLPASRVSTQPVLRLADSAESLLGRPALWALGFLLCPPSQAQ</variation>
    <location>
        <begin position="94"/>
        <end position="131"/>
    </location>
</feature>
<feature type="sequence conflict" description="In Ref. 1; AAC98697." evidence="5" ref="1">
    <original>N</original>
    <variation>K</variation>
    <location>
        <position position="123"/>
    </location>
</feature>
<reference key="1">
    <citation type="journal article" date="2001" name="Biochim. Biophys. Acta">
        <title>Cloning and characterization of a novel human leptin receptor overlapping transcript-like 1 gene (LEPROTL1).</title>
        <authorList>
            <person name="Huang Y."/>
            <person name="Ying K."/>
            <person name="Xie Y."/>
            <person name="Zhou Z."/>
            <person name="Wang W."/>
            <person name="Tang R."/>
            <person name="Zhao W."/>
            <person name="Zhao S."/>
            <person name="Wu H."/>
            <person name="Gu S."/>
            <person name="Mao Y.M."/>
        </authorList>
    </citation>
    <scope>NUCLEOTIDE SEQUENCE [MRNA] (ISOFORM 1)</scope>
    <source>
        <tissue>Fetal brain</tissue>
    </source>
</reference>
<reference key="2">
    <citation type="journal article" date="2003" name="Genome Res.">
        <title>The secreted protein discovery initiative (SPDI), a large-scale effort to identify novel human secreted and transmembrane proteins: a bioinformatics assessment.</title>
        <authorList>
            <person name="Clark H.F."/>
            <person name="Gurney A.L."/>
            <person name="Abaya E."/>
            <person name="Baker K."/>
            <person name="Baldwin D.T."/>
            <person name="Brush J."/>
            <person name="Chen J."/>
            <person name="Chow B."/>
            <person name="Chui C."/>
            <person name="Crowley C."/>
            <person name="Currell B."/>
            <person name="Deuel B."/>
            <person name="Dowd P."/>
            <person name="Eaton D."/>
            <person name="Foster J.S."/>
            <person name="Grimaldi C."/>
            <person name="Gu Q."/>
            <person name="Hass P.E."/>
            <person name="Heldens S."/>
            <person name="Huang A."/>
            <person name="Kim H.S."/>
            <person name="Klimowski L."/>
            <person name="Jin Y."/>
            <person name="Johnson S."/>
            <person name="Lee J."/>
            <person name="Lewis L."/>
            <person name="Liao D."/>
            <person name="Mark M.R."/>
            <person name="Robbie E."/>
            <person name="Sanchez C."/>
            <person name="Schoenfeld J."/>
            <person name="Seshagiri S."/>
            <person name="Simmons L."/>
            <person name="Singh J."/>
            <person name="Smith V."/>
            <person name="Stinson J."/>
            <person name="Vagts A."/>
            <person name="Vandlen R.L."/>
            <person name="Watanabe C."/>
            <person name="Wieand D."/>
            <person name="Woods K."/>
            <person name="Xie M.-H."/>
            <person name="Yansura D.G."/>
            <person name="Yi S."/>
            <person name="Yu G."/>
            <person name="Yuan J."/>
            <person name="Zhang M."/>
            <person name="Zhang Z."/>
            <person name="Goddard A.D."/>
            <person name="Wood W.I."/>
            <person name="Godowski P.J."/>
            <person name="Gray A.M."/>
        </authorList>
    </citation>
    <scope>NUCLEOTIDE SEQUENCE [LARGE SCALE MRNA] (ISOFORM 1)</scope>
</reference>
<reference key="3">
    <citation type="submission" date="2003-04" db="EMBL/GenBank/DDBJ databases">
        <title>Full-length cDNA libraries and normalization.</title>
        <authorList>
            <person name="Li W.B."/>
            <person name="Gruber C."/>
            <person name="Jessee J."/>
            <person name="Polayes D."/>
        </authorList>
    </citation>
    <scope>NUCLEOTIDE SEQUENCE [LARGE SCALE MRNA] (ISOFORM 2)</scope>
    <source>
        <tissue>Placenta</tissue>
    </source>
</reference>
<reference key="4">
    <citation type="journal article" date="2006" name="Nature">
        <title>DNA sequence and analysis of human chromosome 8.</title>
        <authorList>
            <person name="Nusbaum C."/>
            <person name="Mikkelsen T.S."/>
            <person name="Zody M.C."/>
            <person name="Asakawa S."/>
            <person name="Taudien S."/>
            <person name="Garber M."/>
            <person name="Kodira C.D."/>
            <person name="Schueler M.G."/>
            <person name="Shimizu A."/>
            <person name="Whittaker C.A."/>
            <person name="Chang J.L."/>
            <person name="Cuomo C.A."/>
            <person name="Dewar K."/>
            <person name="FitzGerald M.G."/>
            <person name="Yang X."/>
            <person name="Allen N.R."/>
            <person name="Anderson S."/>
            <person name="Asakawa T."/>
            <person name="Blechschmidt K."/>
            <person name="Bloom T."/>
            <person name="Borowsky M.L."/>
            <person name="Butler J."/>
            <person name="Cook A."/>
            <person name="Corum B."/>
            <person name="DeArellano K."/>
            <person name="DeCaprio D."/>
            <person name="Dooley K.T."/>
            <person name="Dorris L. III"/>
            <person name="Engels R."/>
            <person name="Gloeckner G."/>
            <person name="Hafez N."/>
            <person name="Hagopian D.S."/>
            <person name="Hall J.L."/>
            <person name="Ishikawa S.K."/>
            <person name="Jaffe D.B."/>
            <person name="Kamat A."/>
            <person name="Kudoh J."/>
            <person name="Lehmann R."/>
            <person name="Lokitsang T."/>
            <person name="Macdonald P."/>
            <person name="Major J.E."/>
            <person name="Matthews C.D."/>
            <person name="Mauceli E."/>
            <person name="Menzel U."/>
            <person name="Mihalev A.H."/>
            <person name="Minoshima S."/>
            <person name="Murayama Y."/>
            <person name="Naylor J.W."/>
            <person name="Nicol R."/>
            <person name="Nguyen C."/>
            <person name="O'Leary S.B."/>
            <person name="O'Neill K."/>
            <person name="Parker S.C.J."/>
            <person name="Polley A."/>
            <person name="Raymond C.K."/>
            <person name="Reichwald K."/>
            <person name="Rodriguez J."/>
            <person name="Sasaki T."/>
            <person name="Schilhabel M."/>
            <person name="Siddiqui R."/>
            <person name="Smith C.L."/>
            <person name="Sneddon T.P."/>
            <person name="Talamas J.A."/>
            <person name="Tenzin P."/>
            <person name="Topham K."/>
            <person name="Venkataraman V."/>
            <person name="Wen G."/>
            <person name="Yamazaki S."/>
            <person name="Young S.K."/>
            <person name="Zeng Q."/>
            <person name="Zimmer A.R."/>
            <person name="Rosenthal A."/>
            <person name="Birren B.W."/>
            <person name="Platzer M."/>
            <person name="Shimizu N."/>
            <person name="Lander E.S."/>
        </authorList>
    </citation>
    <scope>NUCLEOTIDE SEQUENCE [LARGE SCALE GENOMIC DNA]</scope>
</reference>
<reference key="5">
    <citation type="journal article" date="2004" name="Genome Res.">
        <title>The status, quality, and expansion of the NIH full-length cDNA project: the Mammalian Gene Collection (MGC).</title>
        <authorList>
            <consortium name="The MGC Project Team"/>
        </authorList>
    </citation>
    <scope>NUCLEOTIDE SEQUENCE [LARGE SCALE MRNA] (ISOFORM 1)</scope>
    <source>
        <tissue>Eye</tissue>
    </source>
</reference>
<reference key="6">
    <citation type="journal article" date="2009" name="J. Clin. Invest.">
        <title>LEPROT and LEPROTL1 cooperatively decrease hepatic growth hormone action in mice.</title>
        <authorList>
            <person name="Touvier T."/>
            <person name="Conte-Auriol F."/>
            <person name="Briand O."/>
            <person name="Cudejko C."/>
            <person name="Paumelle R."/>
            <person name="Caron S."/>
            <person name="Bauge E."/>
            <person name="Rouille Y."/>
            <person name="Salles J.P."/>
            <person name="Staels B."/>
            <person name="Bailleul B."/>
        </authorList>
    </citation>
    <scope>FUNCTION</scope>
</reference>
<dbReference type="EMBL" id="AF063605">
    <property type="protein sequence ID" value="AAC98697.1"/>
    <property type="molecule type" value="mRNA"/>
</dbReference>
<dbReference type="EMBL" id="AY358674">
    <property type="protein sequence ID" value="AAQ89037.1"/>
    <property type="molecule type" value="mRNA"/>
</dbReference>
<dbReference type="EMBL" id="AC026979">
    <property type="status" value="NOT_ANNOTATED_CDS"/>
    <property type="molecule type" value="Genomic_DNA"/>
</dbReference>
<dbReference type="EMBL" id="AC044849">
    <property type="status" value="NOT_ANNOTATED_CDS"/>
    <property type="molecule type" value="Genomic_DNA"/>
</dbReference>
<dbReference type="EMBL" id="AL546441">
    <property type="status" value="NOT_ANNOTATED_CDS"/>
    <property type="molecule type" value="mRNA"/>
</dbReference>
<dbReference type="EMBL" id="BC000642">
    <property type="protein sequence ID" value="AAH00642.1"/>
    <property type="molecule type" value="mRNA"/>
</dbReference>
<dbReference type="CCDS" id="CCDS47834.1">
    <molecule id="O95214-2"/>
</dbReference>
<dbReference type="CCDS" id="CCDS6075.1">
    <molecule id="O95214-1"/>
</dbReference>
<dbReference type="RefSeq" id="NP_001121680.1">
    <molecule id="O95214-2"/>
    <property type="nucleotide sequence ID" value="NM_001128208.2"/>
</dbReference>
<dbReference type="RefSeq" id="NP_056159.2">
    <molecule id="O95214-1"/>
    <property type="nucleotide sequence ID" value="NM_015344.3"/>
</dbReference>
<dbReference type="SMR" id="O95214"/>
<dbReference type="BioGRID" id="117042">
    <property type="interactions" value="77"/>
</dbReference>
<dbReference type="FunCoup" id="O95214">
    <property type="interactions" value="1727"/>
</dbReference>
<dbReference type="IntAct" id="O95214">
    <property type="interactions" value="75"/>
</dbReference>
<dbReference type="STRING" id="9606.ENSP00000428281"/>
<dbReference type="iPTMnet" id="O95214"/>
<dbReference type="SwissPalm" id="O95214"/>
<dbReference type="BioMuta" id="LEPROTL1"/>
<dbReference type="jPOST" id="O95214"/>
<dbReference type="MassIVE" id="O95214"/>
<dbReference type="PaxDb" id="9606-ENSP00000428281"/>
<dbReference type="PeptideAtlas" id="O95214"/>
<dbReference type="ProteomicsDB" id="20577"/>
<dbReference type="ProteomicsDB" id="50721">
    <molecule id="O95214-1"/>
</dbReference>
<dbReference type="Pumba" id="O95214"/>
<dbReference type="Antibodypedia" id="63110">
    <property type="antibodies" value="17 antibodies from 9 providers"/>
</dbReference>
<dbReference type="DNASU" id="23484"/>
<dbReference type="Ensembl" id="ENST00000321250.13">
    <molecule id="O95214-1"/>
    <property type="protein sequence ID" value="ENSP00000314625.8"/>
    <property type="gene ID" value="ENSG00000104660.19"/>
</dbReference>
<dbReference type="Ensembl" id="ENST00000523116.5">
    <molecule id="O95214-2"/>
    <property type="protein sequence ID" value="ENSP00000428281.1"/>
    <property type="gene ID" value="ENSG00000104660.19"/>
</dbReference>
<dbReference type="GeneID" id="23484"/>
<dbReference type="KEGG" id="hsa:23484"/>
<dbReference type="MANE-Select" id="ENST00000321250.13">
    <property type="protein sequence ID" value="ENSP00000314625.8"/>
    <property type="RefSeq nucleotide sequence ID" value="NM_015344.3"/>
    <property type="RefSeq protein sequence ID" value="NP_056159.2"/>
</dbReference>
<dbReference type="UCSC" id="uc003xhx.3">
    <molecule id="O95214-1"/>
    <property type="organism name" value="human"/>
</dbReference>
<dbReference type="AGR" id="HGNC:6555"/>
<dbReference type="CTD" id="23484"/>
<dbReference type="DisGeNET" id="23484"/>
<dbReference type="GeneCards" id="LEPROTL1"/>
<dbReference type="HGNC" id="HGNC:6555">
    <property type="gene designation" value="LEPROTL1"/>
</dbReference>
<dbReference type="HPA" id="ENSG00000104660">
    <property type="expression patterns" value="Low tissue specificity"/>
</dbReference>
<dbReference type="MIM" id="607338">
    <property type="type" value="gene"/>
</dbReference>
<dbReference type="neXtProt" id="NX_O95214"/>
<dbReference type="OpenTargets" id="ENSG00000104660"/>
<dbReference type="PharmGKB" id="PA30334"/>
<dbReference type="VEuPathDB" id="HostDB:ENSG00000104660"/>
<dbReference type="eggNOG" id="KOG2174">
    <property type="taxonomic scope" value="Eukaryota"/>
</dbReference>
<dbReference type="GeneTree" id="ENSGT00390000006503"/>
<dbReference type="HOGENOM" id="CLU_1577984_0_0_1"/>
<dbReference type="InParanoid" id="O95214"/>
<dbReference type="OMA" id="ICARCAN"/>
<dbReference type="OrthoDB" id="14246at2759"/>
<dbReference type="PAN-GO" id="O95214">
    <property type="GO annotations" value="3 GO annotations based on evolutionary models"/>
</dbReference>
<dbReference type="PhylomeDB" id="O95214"/>
<dbReference type="TreeFam" id="TF313689"/>
<dbReference type="PathwayCommons" id="O95214"/>
<dbReference type="SignaLink" id="O95214"/>
<dbReference type="BioGRID-ORCS" id="23484">
    <property type="hits" value="15 hits in 1157 CRISPR screens"/>
</dbReference>
<dbReference type="ChiTaRS" id="LEPROTL1">
    <property type="organism name" value="human"/>
</dbReference>
<dbReference type="GenomeRNAi" id="23484"/>
<dbReference type="Pharos" id="O95214">
    <property type="development level" value="Tdark"/>
</dbReference>
<dbReference type="PRO" id="PR:O95214"/>
<dbReference type="Proteomes" id="UP000005640">
    <property type="component" value="Chromosome 8"/>
</dbReference>
<dbReference type="RNAct" id="O95214">
    <property type="molecule type" value="protein"/>
</dbReference>
<dbReference type="Bgee" id="ENSG00000104660">
    <property type="expression patterns" value="Expressed in decidua and 208 other cell types or tissues"/>
</dbReference>
<dbReference type="ExpressionAtlas" id="O95214">
    <property type="expression patterns" value="baseline and differential"/>
</dbReference>
<dbReference type="GO" id="GO:0005768">
    <property type="term" value="C:endosome"/>
    <property type="evidence" value="ECO:0000318"/>
    <property type="project" value="GO_Central"/>
</dbReference>
<dbReference type="GO" id="GO:0016020">
    <property type="term" value="C:membrane"/>
    <property type="evidence" value="ECO:0007669"/>
    <property type="project" value="UniProtKB-SubCell"/>
</dbReference>
<dbReference type="GO" id="GO:0042802">
    <property type="term" value="F:identical protein binding"/>
    <property type="evidence" value="ECO:0000353"/>
    <property type="project" value="IntAct"/>
</dbReference>
<dbReference type="GO" id="GO:0032511">
    <property type="term" value="P:late endosome to vacuole transport via multivesicular body sorting pathway"/>
    <property type="evidence" value="ECO:0000318"/>
    <property type="project" value="GO_Central"/>
</dbReference>
<dbReference type="GO" id="GO:0060400">
    <property type="term" value="P:negative regulation of growth hormone receptor signaling pathway"/>
    <property type="evidence" value="ECO:0000318"/>
    <property type="project" value="GO_Central"/>
</dbReference>
<dbReference type="InterPro" id="IPR007262">
    <property type="entry name" value="Vps55/LEPROT"/>
</dbReference>
<dbReference type="PANTHER" id="PTHR12050:SF4">
    <property type="entry name" value="LEPTIN RECEPTOR OVERLAPPING TRANSCRIPT-LIKE 1"/>
    <property type="match status" value="1"/>
</dbReference>
<dbReference type="PANTHER" id="PTHR12050">
    <property type="entry name" value="LEPTIN RECEPTOR-RELATED"/>
    <property type="match status" value="1"/>
</dbReference>
<dbReference type="Pfam" id="PF04133">
    <property type="entry name" value="Vps55"/>
    <property type="match status" value="1"/>
</dbReference>
<protein>
    <recommendedName>
        <fullName>Leptin receptor overlapping transcript-like 1</fullName>
    </recommendedName>
    <alternativeName>
        <fullName>Endospanin-2</fullName>
    </alternativeName>
</protein>
<comment type="function">
    <text evidence="3">Negatively regulates growth hormone (GH) receptor cell surface expression in liver. May play a role in liver resistance to GH during periods of reduced nutrient availability.</text>
</comment>
<comment type="subunit">
    <text evidence="1">Interacts with RAB13.</text>
</comment>
<comment type="interaction">
    <interactant intactId="EBI-750776">
        <id>O95214</id>
    </interactant>
    <interactant intactId="EBI-1754287">
        <id>Q9NRZ5</id>
        <label>AGPAT4</label>
    </interactant>
    <organismsDiffer>false</organismsDiffer>
    <experiments>3</experiments>
</comment>
<comment type="interaction">
    <interactant intactId="EBI-750776">
        <id>O95214</id>
    </interactant>
    <interactant intactId="EBI-11343438">
        <id>Q3SXY8</id>
        <label>ARL13B</label>
    </interactant>
    <organismsDiffer>false</organismsDiffer>
    <experiments>3</experiments>
</comment>
<comment type="interaction">
    <interactant intactId="EBI-750776">
        <id>O95214</id>
    </interactant>
    <interactant intactId="EBI-12822627">
        <id>O14523</id>
        <label>C2CD2L</label>
    </interactant>
    <organismsDiffer>false</organismsDiffer>
    <experiments>3</experiments>
</comment>
<comment type="interaction">
    <interactant intactId="EBI-750776">
        <id>O95214</id>
    </interactant>
    <interactant intactId="EBI-3915344">
        <id>Q08708</id>
        <label>CD300C</label>
    </interactant>
    <organismsDiffer>false</organismsDiffer>
    <experiments>3</experiments>
</comment>
<comment type="interaction">
    <interactant intactId="EBI-750776">
        <id>O95214</id>
    </interactant>
    <interactant intactId="EBI-7797864">
        <id>P11912</id>
        <label>CD79A</label>
    </interactant>
    <organismsDiffer>false</organismsDiffer>
    <experiments>3</experiments>
</comment>
<comment type="interaction">
    <interactant intactId="EBI-750776">
        <id>O95214</id>
    </interactant>
    <interactant intactId="EBI-1045797">
        <id>Q8N5K1</id>
        <label>CISD2</label>
    </interactant>
    <organismsDiffer>false</organismsDiffer>
    <experiments>3</experiments>
</comment>
<comment type="interaction">
    <interactant intactId="EBI-750776">
        <id>O95214</id>
    </interactant>
    <interactant intactId="EBI-740744">
        <id>O95471</id>
        <label>CLDN7</label>
    </interactant>
    <organismsDiffer>false</organismsDiffer>
    <experiments>3</experiments>
</comment>
<comment type="interaction">
    <interactant intactId="EBI-750776">
        <id>O95214</id>
    </interactant>
    <interactant intactId="EBI-11749983">
        <id>Q9UHP7-3</id>
        <label>CLEC2D</label>
    </interactant>
    <organismsDiffer>false</organismsDiffer>
    <experiments>3</experiments>
</comment>
<comment type="interaction">
    <interactant intactId="EBI-750776">
        <id>O95214</id>
    </interactant>
    <interactant intactId="EBI-6942903">
        <id>Q96BA8</id>
        <label>CREB3L1</label>
    </interactant>
    <organismsDiffer>false</organismsDiffer>
    <experiments>3</experiments>
</comment>
<comment type="interaction">
    <interactant intactId="EBI-750776">
        <id>O95214</id>
    </interactant>
    <interactant intactId="EBI-1752413">
        <id>P78329</id>
        <label>CYP4F2</label>
    </interactant>
    <organismsDiffer>false</organismsDiffer>
    <experiments>3</experiments>
</comment>
<comment type="interaction">
    <interactant intactId="EBI-750776">
        <id>O95214</id>
    </interactant>
    <interactant intactId="EBI-529425">
        <id>Q92838</id>
        <label>EDA</label>
    </interactant>
    <organismsDiffer>false</organismsDiffer>
    <experiments>4</experiments>
</comment>
<comment type="interaction">
    <interactant intactId="EBI-750776">
        <id>O95214</id>
    </interactant>
    <interactant intactId="EBI-2339219">
        <id>Q08426</id>
        <label>EHHADH</label>
    </interactant>
    <organismsDiffer>false</organismsDiffer>
    <experiments>5</experiments>
</comment>
<comment type="interaction">
    <interactant intactId="EBI-750776">
        <id>O95214</id>
    </interactant>
    <interactant intactId="EBI-18535450">
        <id>Q9GZR5</id>
        <label>ELOVL4</label>
    </interactant>
    <organismsDiffer>false</organismsDiffer>
    <experiments>3</experiments>
</comment>
<comment type="interaction">
    <interactant intactId="EBI-750776">
        <id>O95214</id>
    </interactant>
    <interactant intactId="EBI-4319440">
        <id>P54849</id>
        <label>EMP1</label>
    </interactant>
    <organismsDiffer>false</organismsDiffer>
    <experiments>3</experiments>
</comment>
<comment type="interaction">
    <interactant intactId="EBI-750776">
        <id>O95214</id>
    </interactant>
    <interactant intactId="EBI-2833872">
        <id>O15552</id>
        <label>FFAR2</label>
    </interactant>
    <organismsDiffer>false</organismsDiffer>
    <experiments>3</experiments>
</comment>
<comment type="interaction">
    <interactant intactId="EBI-750776">
        <id>O95214</id>
    </interactant>
    <interactant intactId="EBI-12701460">
        <id>Q01740</id>
        <label>FMO1</label>
    </interactant>
    <organismsDiffer>false</organismsDiffer>
    <experiments>3</experiments>
</comment>
<comment type="interaction">
    <interactant intactId="EBI-750776">
        <id>O95214</id>
    </interactant>
    <interactant intactId="EBI-750433">
        <id>P36382</id>
        <label>GJA5</label>
    </interactant>
    <organismsDiffer>false</organismsDiffer>
    <experiments>3</experiments>
</comment>
<comment type="interaction">
    <interactant intactId="EBI-750776">
        <id>O95214</id>
    </interactant>
    <interactant intactId="EBI-17458373">
        <id>P48165</id>
        <label>GJA8</label>
    </interactant>
    <organismsDiffer>false</organismsDiffer>
    <experiments>3</experiments>
</comment>
<comment type="interaction">
    <interactant intactId="EBI-750776">
        <id>O95214</id>
    </interactant>
    <interactant intactId="EBI-13345167">
        <id>Q8TDT2</id>
        <label>GPR152</label>
    </interactant>
    <organismsDiffer>false</organismsDiffer>
    <experiments>3</experiments>
</comment>
<comment type="interaction">
    <interactant intactId="EBI-750776">
        <id>O95214</id>
    </interactant>
    <interactant intactId="EBI-18076404">
        <id>O15529</id>
        <label>GPR42</label>
    </interactant>
    <organismsDiffer>false</organismsDiffer>
    <experiments>3</experiments>
</comment>
<comment type="interaction">
    <interactant intactId="EBI-750776">
        <id>O95214</id>
    </interactant>
    <interactant intactId="EBI-11721746">
        <id>Q8TED1</id>
        <label>GPX8</label>
    </interactant>
    <organismsDiffer>false</organismsDiffer>
    <experiments>3</experiments>
</comment>
<comment type="interaction">
    <interactant intactId="EBI-750776">
        <id>O95214</id>
    </interactant>
    <interactant intactId="EBI-465137">
        <id>Q9HDC5</id>
        <label>JPH1</label>
    </interactant>
    <organismsDiffer>false</organismsDiffer>
    <experiments>3</experiments>
</comment>
<comment type="interaction">
    <interactant intactId="EBI-750776">
        <id>O95214</id>
    </interactant>
    <interactant intactId="EBI-12017638">
        <id>P48051</id>
        <label>KCNJ6</label>
    </interactant>
    <organismsDiffer>false</organismsDiffer>
    <experiments>3</experiments>
</comment>
<comment type="interaction">
    <interactant intactId="EBI-750776">
        <id>O95214</id>
    </interactant>
    <interactant intactId="EBI-750770">
        <id>Q96E93</id>
        <label>KLRG1</label>
    </interactant>
    <organismsDiffer>false</organismsDiffer>
    <experiments>4</experiments>
</comment>
<comment type="interaction">
    <interactant intactId="EBI-750776">
        <id>O95214</id>
    </interactant>
    <interactant intactId="EBI-750776">
        <id>O95214</id>
        <label>LEPROTL1</label>
    </interactant>
    <organismsDiffer>false</organismsDiffer>
    <experiments>3</experiments>
</comment>
<comment type="interaction">
    <interactant intactId="EBI-750776">
        <id>O95214</id>
    </interactant>
    <interactant intactId="EBI-6138627">
        <id>Q8WVP7</id>
        <label>LMBR1</label>
    </interactant>
    <organismsDiffer>false</organismsDiffer>
    <experiments>3</experiments>
</comment>
<comment type="interaction">
    <interactant intactId="EBI-750776">
        <id>O95214</id>
    </interactant>
    <interactant intactId="EBI-739832">
        <id>Q8TBB1</id>
        <label>LNX1</label>
    </interactant>
    <organismsDiffer>false</organismsDiffer>
    <experiments>3</experiments>
</comment>
<comment type="interaction">
    <interactant intactId="EBI-750776">
        <id>O95214</id>
    </interactant>
    <interactant intactId="EBI-12033434">
        <id>Q9UBY5</id>
        <label>LPAR3</label>
    </interactant>
    <organismsDiffer>false</organismsDiffer>
    <experiments>3</experiments>
</comment>
<comment type="interaction">
    <interactant intactId="EBI-750776">
        <id>O95214</id>
    </interactant>
    <interactant intactId="EBI-3925442">
        <id>Q9HCJ2</id>
        <label>LRRC4C</label>
    </interactant>
    <organismsDiffer>false</organismsDiffer>
    <experiments>3</experiments>
</comment>
<comment type="interaction">
    <interactant intactId="EBI-750776">
        <id>O95214</id>
    </interactant>
    <interactant intactId="EBI-750078">
        <id>Q13021</id>
        <label>MALL</label>
    </interactant>
    <organismsDiffer>false</organismsDiffer>
    <experiments>3</experiments>
</comment>
<comment type="interaction">
    <interactant intactId="EBI-750776">
        <id>O95214</id>
    </interactant>
    <interactant intactId="EBI-373355">
        <id>Q5SR56</id>
        <label>MFSD14B</label>
    </interactant>
    <organismsDiffer>false</organismsDiffer>
    <experiments>3</experiments>
</comment>
<comment type="interaction">
    <interactant intactId="EBI-750776">
        <id>O95214</id>
    </interactant>
    <interactant intactId="EBI-1776976">
        <id>P21757</id>
        <label>MSR1</label>
    </interactant>
    <organismsDiffer>false</organismsDiffer>
    <experiments>4</experiments>
</comment>
<comment type="interaction">
    <interactant intactId="EBI-750776">
        <id>O95214</id>
    </interactant>
    <interactant intactId="EBI-2863634">
        <id>Q9UHE5</id>
        <label>NAT8</label>
    </interactant>
    <organismsDiffer>false</organismsDiffer>
    <experiments>3</experiments>
</comment>
<comment type="interaction">
    <interactant intactId="EBI-750776">
        <id>O95214</id>
    </interactant>
    <interactant intactId="EBI-1246131">
        <id>O95167</id>
        <label>NDUFA3</label>
    </interactant>
    <organismsDiffer>false</organismsDiffer>
    <experiments>3</experiments>
</comment>
<comment type="interaction">
    <interactant intactId="EBI-750776">
        <id>O95214</id>
    </interactant>
    <interactant intactId="EBI-10262547">
        <id>Q8IXM6</id>
        <label>NRM</label>
    </interactant>
    <organismsDiffer>false</organismsDiffer>
    <experiments>3</experiments>
</comment>
<comment type="interaction">
    <interactant intactId="EBI-750776">
        <id>O95214</id>
    </interactant>
    <interactant intactId="EBI-1054848">
        <id>Q9P0S3</id>
        <label>ORMDL1</label>
    </interactant>
    <organismsDiffer>false</organismsDiffer>
    <experiments>3</experiments>
</comment>
<comment type="interaction">
    <interactant intactId="EBI-750776">
        <id>O95214</id>
    </interactant>
    <interactant intactId="EBI-721750">
        <id>Q8N138</id>
        <label>ORMDL3</label>
    </interactant>
    <organismsDiffer>false</organismsDiffer>
    <experiments>3</experiments>
</comment>
<comment type="interaction">
    <interactant intactId="EBI-750776">
        <id>O95214</id>
    </interactant>
    <interactant intactId="EBI-12847818">
        <id>Q8TEZ7</id>
        <label>PAQR8</label>
    </interactant>
    <organismsDiffer>false</organismsDiffer>
    <experiments>3</experiments>
</comment>
<comment type="interaction">
    <interactant intactId="EBI-750776">
        <id>O95214</id>
    </interactant>
    <interactant intactId="EBI-716063">
        <id>Q13113</id>
        <label>PDZK1IP1</label>
    </interactant>
    <organismsDiffer>false</organismsDiffer>
    <experiments>3</experiments>
</comment>
<comment type="interaction">
    <interactant intactId="EBI-750776">
        <id>O95214</id>
    </interactant>
    <interactant intactId="EBI-981985">
        <id>Q9Y5Y5</id>
        <label>PEX16</label>
    </interactant>
    <organismsDiffer>false</organismsDiffer>
    <experiments>3</experiments>
</comment>
<comment type="interaction">
    <interactant intactId="EBI-750776">
        <id>O95214</id>
    </interactant>
    <interactant intactId="EBI-12188331">
        <id>P60201-2</id>
        <label>PLP1</label>
    </interactant>
    <organismsDiffer>false</organismsDiffer>
    <experiments>3</experiments>
</comment>
<comment type="interaction">
    <interactant intactId="EBI-750776">
        <id>O95214</id>
    </interactant>
    <interactant intactId="EBI-3232108">
        <id>Q8N0V3</id>
        <label>RBFA</label>
    </interactant>
    <organismsDiffer>false</organismsDiffer>
    <experiments>3</experiments>
</comment>
<comment type="interaction">
    <interactant intactId="EBI-750776">
        <id>O95214</id>
    </interactant>
    <interactant intactId="EBI-7545592">
        <id>Q9H6H4</id>
        <label>REEP4</label>
    </interactant>
    <organismsDiffer>false</organismsDiffer>
    <experiments>3</experiments>
</comment>
<comment type="interaction">
    <interactant intactId="EBI-750776">
        <id>O95214</id>
    </interactant>
    <interactant intactId="EBI-14065960">
        <id>Q96HR9-2</id>
        <label>REEP6</label>
    </interactant>
    <organismsDiffer>false</organismsDiffer>
    <experiments>3</experiments>
</comment>
<comment type="interaction">
    <interactant intactId="EBI-750776">
        <id>O95214</id>
    </interactant>
    <interactant intactId="EBI-348482">
        <id>Q99942</id>
        <label>RNF5</label>
    </interactant>
    <organismsDiffer>false</organismsDiffer>
    <experiments>3</experiments>
</comment>
<comment type="interaction">
    <interactant intactId="EBI-750776">
        <id>O95214</id>
    </interactant>
    <interactant intactId="EBI-10244780">
        <id>Q5QGT7</id>
        <label>RTP2</label>
    </interactant>
    <organismsDiffer>false</organismsDiffer>
    <experiments>3</experiments>
</comment>
<comment type="interaction">
    <interactant intactId="EBI-750776">
        <id>O95214</id>
    </interactant>
    <interactant intactId="EBI-17247926">
        <id>Q9NY72</id>
        <label>SCN3B</label>
    </interactant>
    <organismsDiffer>false</organismsDiffer>
    <experiments>3</experiments>
</comment>
<comment type="interaction">
    <interactant intactId="EBI-750776">
        <id>O95214</id>
    </interactant>
    <interactant intactId="EBI-727004">
        <id>O00560</id>
        <label>SDCBP</label>
    </interactant>
    <organismsDiffer>false</organismsDiffer>
    <experiments>3</experiments>
</comment>
<comment type="interaction">
    <interactant intactId="EBI-750776">
        <id>O95214</id>
    </interactant>
    <interactant intactId="EBI-1171999">
        <id>Q9BWM7</id>
        <label>SFXN3</label>
    </interactant>
    <organismsDiffer>false</organismsDiffer>
    <experiments>3</experiments>
</comment>
<comment type="interaction">
    <interactant intactId="EBI-750776">
        <id>O95214</id>
    </interactant>
    <interactant intactId="EBI-10281975">
        <id>Q96AG3</id>
        <label>SLC25A46</label>
    </interactant>
    <organismsDiffer>false</organismsDiffer>
    <experiments>3</experiments>
</comment>
<comment type="interaction">
    <interactant intactId="EBI-750776">
        <id>O95214</id>
    </interactant>
    <interactant intactId="EBI-13918058">
        <id>O14863</id>
        <label>SLC30A4</label>
    </interactant>
    <organismsDiffer>false</organismsDiffer>
    <experiments>3</experiments>
</comment>
<comment type="interaction">
    <interactant intactId="EBI-750776">
        <id>O95214</id>
    </interactant>
    <interactant intactId="EBI-17295964">
        <id>Q9NQQ7-3</id>
        <label>SLC35C2</label>
    </interactant>
    <organismsDiffer>false</organismsDiffer>
    <experiments>3</experiments>
</comment>
<comment type="interaction">
    <interactant intactId="EBI-750776">
        <id>O95214</id>
    </interactant>
    <interactant intactId="EBI-4289564">
        <id>P30825</id>
        <label>SLC7A1</label>
    </interactant>
    <organismsDiffer>false</organismsDiffer>
    <experiments>3</experiments>
</comment>
<comment type="interaction">
    <interactant intactId="EBI-750776">
        <id>O95214</id>
    </interactant>
    <interactant intactId="EBI-8640191">
        <id>Q9NRQ5</id>
        <label>SMCO4</label>
    </interactant>
    <organismsDiffer>false</organismsDiffer>
    <experiments>3</experiments>
</comment>
<comment type="interaction">
    <interactant intactId="EBI-750776">
        <id>O95214</id>
    </interactant>
    <interactant intactId="EBI-742688">
        <id>Q9NZD8</id>
        <label>SPG21</label>
    </interactant>
    <organismsDiffer>false</organismsDiffer>
    <experiments>3</experiments>
</comment>
<comment type="interaction">
    <interactant intactId="EBI-750776">
        <id>O95214</id>
    </interactant>
    <interactant intactId="EBI-17280858">
        <id>Q8WWF3</id>
        <label>SSMEM1</label>
    </interactant>
    <organismsDiffer>false</organismsDiffer>
    <experiments>3</experiments>
</comment>
<comment type="interaction">
    <interactant intactId="EBI-750776">
        <id>O95214</id>
    </interactant>
    <interactant intactId="EBI-2800345">
        <id>Q86WV6</id>
        <label>STING1</label>
    </interactant>
    <organismsDiffer>false</organismsDiffer>
    <experiments>3</experiments>
</comment>
<comment type="interaction">
    <interactant intactId="EBI-750776">
        <id>O95214</id>
    </interactant>
    <interactant intactId="EBI-2691717">
        <id>Q86Y82</id>
        <label>STX12</label>
    </interactant>
    <organismsDiffer>false</organismsDiffer>
    <experiments>3</experiments>
</comment>
<comment type="interaction">
    <interactant intactId="EBI-750776">
        <id>O95214</id>
    </interactant>
    <interactant intactId="EBI-726331">
        <id>Q9H7V2</id>
        <label>SYNDIG1</label>
    </interactant>
    <organismsDiffer>false</organismsDiffer>
    <experiments>3</experiments>
</comment>
<comment type="interaction">
    <interactant intactId="EBI-750776">
        <id>O95214</id>
    </interactant>
    <interactant intactId="EBI-12367411">
        <id>P01135-2</id>
        <label>TGFA</label>
    </interactant>
    <organismsDiffer>false</organismsDiffer>
    <experiments>3</experiments>
</comment>
<comment type="interaction">
    <interactant intactId="EBI-750776">
        <id>O95214</id>
    </interactant>
    <interactant intactId="EBI-723946">
        <id>P17152</id>
        <label>TMEM11</label>
    </interactant>
    <organismsDiffer>false</organismsDiffer>
    <experiments>3</experiments>
</comment>
<comment type="interaction">
    <interactant intactId="EBI-750776">
        <id>O95214</id>
    </interactant>
    <interactant intactId="EBI-8638294">
        <id>Q9NUH8</id>
        <label>TMEM14B</label>
    </interactant>
    <organismsDiffer>false</organismsDiffer>
    <experiments>3</experiments>
</comment>
<comment type="interaction">
    <interactant intactId="EBI-750776">
        <id>O95214</id>
    </interactant>
    <interactant intactId="EBI-741829">
        <id>Q96HH6</id>
        <label>TMEM19</label>
    </interactant>
    <organismsDiffer>false</organismsDiffer>
    <experiments>3</experiments>
</comment>
<comment type="interaction">
    <interactant intactId="EBI-750776">
        <id>O95214</id>
    </interactant>
    <interactant intactId="EBI-10982110">
        <id>Q96Q45-2</id>
        <label>TMEM237</label>
    </interactant>
    <organismsDiffer>false</organismsDiffer>
    <experiments>3</experiments>
</comment>
<comment type="interaction">
    <interactant intactId="EBI-750776">
        <id>O95214</id>
    </interactant>
    <interactant intactId="EBI-10314986">
        <id>Q9NWD8</id>
        <label>TMEM248</label>
    </interactant>
    <organismsDiffer>false</organismsDiffer>
    <experiments>3</experiments>
</comment>
<comment type="interaction">
    <interactant intactId="EBI-750776">
        <id>O95214</id>
    </interactant>
    <interactant intactId="EBI-12038591">
        <id>Q69YG0</id>
        <label>TMEM42</label>
    </interactant>
    <organismsDiffer>false</organismsDiffer>
    <experiments>3</experiments>
</comment>
<comment type="interaction">
    <interactant intactId="EBI-750776">
        <id>O95214</id>
    </interactant>
    <interactant intactId="EBI-12903814">
        <id>O95807</id>
        <label>TMEM50A</label>
    </interactant>
    <organismsDiffer>false</organismsDiffer>
    <experiments>3</experiments>
</comment>
<comment type="interaction">
    <interactant intactId="EBI-750776">
        <id>O95214</id>
    </interactant>
    <interactant intactId="EBI-12366453">
        <id>P56557</id>
        <label>TMEM50B</label>
    </interactant>
    <organismsDiffer>false</organismsDiffer>
    <experiments>3</experiments>
</comment>
<comment type="interaction">
    <interactant intactId="EBI-750776">
        <id>O95214</id>
    </interactant>
    <interactant intactId="EBI-2852148">
        <id>Q9H2L4</id>
        <label>TMEM60</label>
    </interactant>
    <organismsDiffer>false</organismsDiffer>
    <experiments>3</experiments>
</comment>
<comment type="interaction">
    <interactant intactId="EBI-750776">
        <id>O95214</id>
    </interactant>
    <interactant intactId="EBI-6447886">
        <id>Q9Y320</id>
        <label>TMX2</label>
    </interactant>
    <organismsDiffer>false</organismsDiffer>
    <experiments>3</experiments>
</comment>
<comment type="interaction">
    <interactant intactId="EBI-750776">
        <id>O95214</id>
    </interactant>
    <interactant intactId="EBI-12003468">
        <id>A0AVG3</id>
        <label>TSNARE1</label>
    </interactant>
    <organismsDiffer>false</organismsDiffer>
    <experiments>3</experiments>
</comment>
<comment type="interaction">
    <interactant intactId="EBI-750776">
        <id>O95214</id>
    </interactant>
    <interactant intactId="EBI-3914288">
        <id>O60636</id>
        <label>TSPAN2</label>
    </interactant>
    <organismsDiffer>false</organismsDiffer>
    <experiments>3</experiments>
</comment>
<comment type="interaction">
    <interactant intactId="EBI-750776">
        <id>O95214</id>
    </interactant>
    <interactant intactId="EBI-13296313">
        <id>A6NH52</id>
        <label>TVP23A</label>
    </interactant>
    <organismsDiffer>false</organismsDiffer>
    <experiments>3</experiments>
</comment>
<comment type="interaction">
    <interactant intactId="EBI-750776">
        <id>O95214</id>
    </interactant>
    <interactant intactId="EBI-1059156">
        <id>Q9P0L0</id>
        <label>VAPA</label>
    </interactant>
    <organismsDiffer>false</organismsDiffer>
    <experiments>3</experiments>
</comment>
<comment type="interaction">
    <interactant intactId="EBI-750776">
        <id>O95214</id>
    </interactant>
    <interactant intactId="EBI-751204">
        <id>Q9BWQ6</id>
        <label>YIPF2</label>
    </interactant>
    <organismsDiffer>false</organismsDiffer>
    <experiments>3</experiments>
</comment>
<comment type="interaction">
    <interactant intactId="EBI-750776">
        <id>O95214</id>
    </interactant>
    <interactant intactId="EBI-12837904">
        <id>Q96MV8</id>
        <label>ZDHHC15</label>
    </interactant>
    <organismsDiffer>false</organismsDiffer>
    <experiments>3</experiments>
</comment>
<comment type="subcellular location">
    <subcellularLocation>
        <location evidence="5">Membrane</location>
        <topology evidence="5">Multi-pass membrane protein</topology>
    </subcellularLocation>
</comment>
<comment type="alternative products">
    <event type="alternative splicing"/>
    <isoform>
        <id>O95214-1</id>
        <name>1</name>
        <sequence type="displayed"/>
    </isoform>
    <isoform>
        <id>O95214-2</id>
        <name>2</name>
        <sequence type="described" ref="VSP_046307"/>
    </isoform>
</comment>
<comment type="tissue specificity">
    <text>Widely expressed, with highest expression in heart, testis, adrenal gland, thymus, and spleen, and lowest expression in lung and skeletal muscle.</text>
</comment>
<comment type="similarity">
    <text evidence="5">Belongs to the OB-RGRP/VPS55 family.</text>
</comment>
<accession>O95214</accession>
<accession>E9PHP8</accession>
<accession>Q9BW48</accession>
<keyword id="KW-0025">Alternative splicing</keyword>
<keyword id="KW-0472">Membrane</keyword>
<keyword id="KW-1267">Proteomics identification</keyword>
<keyword id="KW-1185">Reference proteome</keyword>
<keyword id="KW-0812">Transmembrane</keyword>
<keyword id="KW-1133">Transmembrane helix</keyword>
<proteinExistence type="evidence at protein level"/>
<name>LERL1_HUMAN</name>
<evidence type="ECO:0000250" key="1"/>
<evidence type="ECO:0000255" key="2"/>
<evidence type="ECO:0000269" key="3">
    <source>
    </source>
</evidence>
<evidence type="ECO:0000303" key="4">
    <source ref="3"/>
</evidence>
<evidence type="ECO:0000305" key="5"/>
<sequence length="131" mass="14428">MAGIKALISLSFGGAIGLMFLMLGCALPIYNKYWPLFVLFFYILSPIPYCIARRLVDDTDAMSNACKELAIFLTTGIVVSAFGLPIVFARAHLIEWGACALVLTGNTVIFATILGFFLVFGSNDDFSWQQW</sequence>